<reference key="1">
    <citation type="journal article" date="2002" name="Nucleic Acids Res.">
        <title>Genome sequence of Shigella flexneri 2a: insights into pathogenicity through comparison with genomes of Escherichia coli K12 and O157.</title>
        <authorList>
            <person name="Jin Q."/>
            <person name="Yuan Z."/>
            <person name="Xu J."/>
            <person name="Wang Y."/>
            <person name="Shen Y."/>
            <person name="Lu W."/>
            <person name="Wang J."/>
            <person name="Liu H."/>
            <person name="Yang J."/>
            <person name="Yang F."/>
            <person name="Zhang X."/>
            <person name="Zhang J."/>
            <person name="Yang G."/>
            <person name="Wu H."/>
            <person name="Qu D."/>
            <person name="Dong J."/>
            <person name="Sun L."/>
            <person name="Xue Y."/>
            <person name="Zhao A."/>
            <person name="Gao Y."/>
            <person name="Zhu J."/>
            <person name="Kan B."/>
            <person name="Ding K."/>
            <person name="Chen S."/>
            <person name="Cheng H."/>
            <person name="Yao Z."/>
            <person name="He B."/>
            <person name="Chen R."/>
            <person name="Ma D."/>
            <person name="Qiang B."/>
            <person name="Wen Y."/>
            <person name="Hou Y."/>
            <person name="Yu J."/>
        </authorList>
    </citation>
    <scope>NUCLEOTIDE SEQUENCE [LARGE SCALE GENOMIC DNA]</scope>
    <source>
        <strain>301 / Serotype 2a</strain>
    </source>
</reference>
<reference key="2">
    <citation type="journal article" date="2003" name="Infect. Immun.">
        <title>Complete genome sequence and comparative genomics of Shigella flexneri serotype 2a strain 2457T.</title>
        <authorList>
            <person name="Wei J."/>
            <person name="Goldberg M.B."/>
            <person name="Burland V."/>
            <person name="Venkatesan M.M."/>
            <person name="Deng W."/>
            <person name="Fournier G."/>
            <person name="Mayhew G.F."/>
            <person name="Plunkett G. III"/>
            <person name="Rose D.J."/>
            <person name="Darling A."/>
            <person name="Mau B."/>
            <person name="Perna N.T."/>
            <person name="Payne S.M."/>
            <person name="Runyen-Janecky L.J."/>
            <person name="Zhou S."/>
            <person name="Schwartz D.C."/>
            <person name="Blattner F.R."/>
        </authorList>
    </citation>
    <scope>NUCLEOTIDE SEQUENCE [LARGE SCALE GENOMIC DNA]</scope>
    <source>
        <strain>ATCC 700930 / 2457T / Serotype 2a</strain>
    </source>
</reference>
<dbReference type="EC" id="2.7.1.167" evidence="1"/>
<dbReference type="EC" id="2.7.7.70" evidence="1"/>
<dbReference type="EMBL" id="AE005674">
    <property type="protein sequence ID" value="AAN44569.1"/>
    <property type="molecule type" value="Genomic_DNA"/>
</dbReference>
<dbReference type="EMBL" id="AE014073">
    <property type="protein sequence ID" value="AAP18381.1"/>
    <property type="molecule type" value="Genomic_DNA"/>
</dbReference>
<dbReference type="RefSeq" id="NP_708862.1">
    <property type="nucleotide sequence ID" value="NC_004337.2"/>
</dbReference>
<dbReference type="RefSeq" id="WP_000869194.1">
    <property type="nucleotide sequence ID" value="NZ_CP123365.1"/>
</dbReference>
<dbReference type="SMR" id="Q7UBI8"/>
<dbReference type="STRING" id="198214.SF3093"/>
<dbReference type="PaxDb" id="198214-SF3093"/>
<dbReference type="GeneID" id="1026686"/>
<dbReference type="KEGG" id="sfl:SF3093"/>
<dbReference type="KEGG" id="sfx:S3298"/>
<dbReference type="PATRIC" id="fig|198214.7.peg.3670"/>
<dbReference type="HOGENOM" id="CLU_021150_2_1_6"/>
<dbReference type="UniPathway" id="UPA00356">
    <property type="reaction ID" value="UER00437"/>
</dbReference>
<dbReference type="UniPathway" id="UPA00356">
    <property type="reaction ID" value="UER00439"/>
</dbReference>
<dbReference type="UniPathway" id="UPA00958"/>
<dbReference type="Proteomes" id="UP000001006">
    <property type="component" value="Chromosome"/>
</dbReference>
<dbReference type="Proteomes" id="UP000002673">
    <property type="component" value="Chromosome"/>
</dbReference>
<dbReference type="GO" id="GO:0005829">
    <property type="term" value="C:cytosol"/>
    <property type="evidence" value="ECO:0007669"/>
    <property type="project" value="TreeGrafter"/>
</dbReference>
<dbReference type="GO" id="GO:0005524">
    <property type="term" value="F:ATP binding"/>
    <property type="evidence" value="ECO:0007669"/>
    <property type="project" value="UniProtKB-UniRule"/>
</dbReference>
<dbReference type="GO" id="GO:0033785">
    <property type="term" value="F:heptose 7-phosphate kinase activity"/>
    <property type="evidence" value="ECO:0007669"/>
    <property type="project" value="UniProtKB-UniRule"/>
</dbReference>
<dbReference type="GO" id="GO:0033786">
    <property type="term" value="F:heptose-1-phosphate adenylyltransferase activity"/>
    <property type="evidence" value="ECO:0007669"/>
    <property type="project" value="UniProtKB-UniRule"/>
</dbReference>
<dbReference type="GO" id="GO:0016773">
    <property type="term" value="F:phosphotransferase activity, alcohol group as acceptor"/>
    <property type="evidence" value="ECO:0007669"/>
    <property type="project" value="InterPro"/>
</dbReference>
<dbReference type="GO" id="GO:0097171">
    <property type="term" value="P:ADP-L-glycero-beta-D-manno-heptose biosynthetic process"/>
    <property type="evidence" value="ECO:0007669"/>
    <property type="project" value="UniProtKB-UniPathway"/>
</dbReference>
<dbReference type="GO" id="GO:0009244">
    <property type="term" value="P:lipopolysaccharide core region biosynthetic process"/>
    <property type="evidence" value="ECO:0007669"/>
    <property type="project" value="UniProtKB-UniPathway"/>
</dbReference>
<dbReference type="CDD" id="cd01172">
    <property type="entry name" value="RfaE_like"/>
    <property type="match status" value="1"/>
</dbReference>
<dbReference type="FunFam" id="3.40.1190.20:FF:000002">
    <property type="entry name" value="Bifunctional protein HldE"/>
    <property type="match status" value="1"/>
</dbReference>
<dbReference type="FunFam" id="3.40.50.620:FF:000028">
    <property type="entry name" value="Bifunctional protein HldE"/>
    <property type="match status" value="1"/>
</dbReference>
<dbReference type="Gene3D" id="3.40.1190.20">
    <property type="match status" value="1"/>
</dbReference>
<dbReference type="Gene3D" id="3.40.50.620">
    <property type="entry name" value="HUPs"/>
    <property type="match status" value="1"/>
</dbReference>
<dbReference type="HAMAP" id="MF_01603">
    <property type="entry name" value="HldE"/>
    <property type="match status" value="1"/>
</dbReference>
<dbReference type="InterPro" id="IPR023030">
    <property type="entry name" value="Bifunc_HldE"/>
</dbReference>
<dbReference type="InterPro" id="IPR002173">
    <property type="entry name" value="Carboh/pur_kinase_PfkB_CS"/>
</dbReference>
<dbReference type="InterPro" id="IPR004821">
    <property type="entry name" value="Cyt_trans-like"/>
</dbReference>
<dbReference type="InterPro" id="IPR011611">
    <property type="entry name" value="PfkB_dom"/>
</dbReference>
<dbReference type="InterPro" id="IPR011913">
    <property type="entry name" value="RfaE_dom_I"/>
</dbReference>
<dbReference type="InterPro" id="IPR011914">
    <property type="entry name" value="RfaE_dom_II"/>
</dbReference>
<dbReference type="InterPro" id="IPR029056">
    <property type="entry name" value="Ribokinase-like"/>
</dbReference>
<dbReference type="InterPro" id="IPR014729">
    <property type="entry name" value="Rossmann-like_a/b/a_fold"/>
</dbReference>
<dbReference type="NCBIfam" id="TIGR00125">
    <property type="entry name" value="cyt_tran_rel"/>
    <property type="match status" value="1"/>
</dbReference>
<dbReference type="NCBIfam" id="NF008454">
    <property type="entry name" value="PRK11316.1"/>
    <property type="match status" value="1"/>
</dbReference>
<dbReference type="NCBIfam" id="TIGR02198">
    <property type="entry name" value="rfaE_dom_I"/>
    <property type="match status" value="1"/>
</dbReference>
<dbReference type="NCBIfam" id="TIGR02199">
    <property type="entry name" value="rfaE_dom_II"/>
    <property type="match status" value="1"/>
</dbReference>
<dbReference type="PANTHER" id="PTHR46969">
    <property type="entry name" value="BIFUNCTIONAL PROTEIN HLDE"/>
    <property type="match status" value="1"/>
</dbReference>
<dbReference type="PANTHER" id="PTHR46969:SF1">
    <property type="entry name" value="BIFUNCTIONAL PROTEIN HLDE"/>
    <property type="match status" value="1"/>
</dbReference>
<dbReference type="Pfam" id="PF01467">
    <property type="entry name" value="CTP_transf_like"/>
    <property type="match status" value="1"/>
</dbReference>
<dbReference type="Pfam" id="PF00294">
    <property type="entry name" value="PfkB"/>
    <property type="match status" value="1"/>
</dbReference>
<dbReference type="SUPFAM" id="SSF52374">
    <property type="entry name" value="Nucleotidylyl transferase"/>
    <property type="match status" value="1"/>
</dbReference>
<dbReference type="SUPFAM" id="SSF53613">
    <property type="entry name" value="Ribokinase-like"/>
    <property type="match status" value="1"/>
</dbReference>
<dbReference type="PROSITE" id="PS00583">
    <property type="entry name" value="PFKB_KINASES_1"/>
    <property type="match status" value="1"/>
</dbReference>
<keyword id="KW-0007">Acetylation</keyword>
<keyword id="KW-0067">ATP-binding</keyword>
<keyword id="KW-0119">Carbohydrate metabolism</keyword>
<keyword id="KW-0418">Kinase</keyword>
<keyword id="KW-0448">Lipopolysaccharide biosynthesis</keyword>
<keyword id="KW-0511">Multifunctional enzyme</keyword>
<keyword id="KW-0547">Nucleotide-binding</keyword>
<keyword id="KW-0548">Nucleotidyltransferase</keyword>
<keyword id="KW-1185">Reference proteome</keyword>
<keyword id="KW-0808">Transferase</keyword>
<comment type="function">
    <text evidence="1">Catalyzes the phosphorylation of D-glycero-D-manno-heptose 7-phosphate at the C-1 position to selectively form D-glycero-beta-D-manno-heptose-1,7-bisphosphate.</text>
</comment>
<comment type="function">
    <text evidence="1">Catalyzes the ADP transfer from ATP to D-glycero-beta-D-manno-heptose 1-phosphate, yielding ADP-D-glycero-beta-D-manno-heptose.</text>
</comment>
<comment type="catalytic activity">
    <reaction evidence="1">
        <text>D-glycero-beta-D-manno-heptose 7-phosphate + ATP = D-glycero-beta-D-manno-heptose 1,7-bisphosphate + ADP + H(+)</text>
        <dbReference type="Rhea" id="RHEA:27473"/>
        <dbReference type="ChEBI" id="CHEBI:15378"/>
        <dbReference type="ChEBI" id="CHEBI:30616"/>
        <dbReference type="ChEBI" id="CHEBI:60204"/>
        <dbReference type="ChEBI" id="CHEBI:60208"/>
        <dbReference type="ChEBI" id="CHEBI:456216"/>
        <dbReference type="EC" id="2.7.1.167"/>
    </reaction>
</comment>
<comment type="catalytic activity">
    <reaction evidence="1">
        <text>D-glycero-beta-D-manno-heptose 1-phosphate + ATP + H(+) = ADP-D-glycero-beta-D-manno-heptose + diphosphate</text>
        <dbReference type="Rhea" id="RHEA:27465"/>
        <dbReference type="ChEBI" id="CHEBI:15378"/>
        <dbReference type="ChEBI" id="CHEBI:30616"/>
        <dbReference type="ChEBI" id="CHEBI:33019"/>
        <dbReference type="ChEBI" id="CHEBI:59967"/>
        <dbReference type="ChEBI" id="CHEBI:61593"/>
        <dbReference type="EC" id="2.7.7.70"/>
    </reaction>
</comment>
<comment type="pathway">
    <text evidence="1">Nucleotide-sugar biosynthesis; ADP-L-glycero-beta-D-manno-heptose biosynthesis; ADP-L-glycero-beta-D-manno-heptose from D-glycero-beta-D-manno-heptose 7-phosphate: step 1/4.</text>
</comment>
<comment type="pathway">
    <text evidence="1">Nucleotide-sugar biosynthesis; ADP-L-glycero-beta-D-manno-heptose biosynthesis; ADP-L-glycero-beta-D-manno-heptose from D-glycero-beta-D-manno-heptose 7-phosphate: step 3/4.</text>
</comment>
<comment type="pathway">
    <text>Bacterial outer membrane biogenesis; LPS core biosynthesis.</text>
</comment>
<comment type="subunit">
    <text evidence="1">Homodimer.</text>
</comment>
<comment type="similarity">
    <text evidence="1">In the N-terminal section; belongs to the carbohydrate kinase PfkB family.</text>
</comment>
<comment type="similarity">
    <text evidence="1">In the C-terminal section; belongs to the cytidylyltransferase family.</text>
</comment>
<evidence type="ECO:0000255" key="1">
    <source>
        <dbReference type="HAMAP-Rule" id="MF_01603"/>
    </source>
</evidence>
<evidence type="ECO:0000305" key="2"/>
<protein>
    <recommendedName>
        <fullName evidence="1">Bifunctional protein HldE</fullName>
    </recommendedName>
    <domain>
        <recommendedName>
            <fullName evidence="1">D-beta-D-heptose 7-phosphate kinase</fullName>
            <ecNumber evidence="1">2.7.1.167</ecNumber>
        </recommendedName>
        <alternativeName>
            <fullName evidence="1">D-beta-D-heptose 7-phosphotransferase</fullName>
        </alternativeName>
        <alternativeName>
            <fullName evidence="1">D-glycero-beta-D-manno-heptose-7-phosphate kinase</fullName>
        </alternativeName>
    </domain>
    <domain>
        <recommendedName>
            <fullName evidence="1">D-beta-D-heptose 1-phosphate adenylyltransferase</fullName>
            <ecNumber evidence="1">2.7.7.70</ecNumber>
        </recommendedName>
        <alternativeName>
            <fullName evidence="1">D-glycero-beta-D-manno-heptose 1-phosphate adenylyltransferase</fullName>
        </alternativeName>
    </domain>
</protein>
<name>HLDE_SHIFL</name>
<proteinExistence type="inferred from homology"/>
<sequence length="477" mass="51129">MKVTLPEFERAGVMVVGDVMLDRYWYGPTSRISPEAPVPVVKVNTIEERPGGAANVAMNIASLGANARLVGLTGIDDAARALSKSLADVNVKCDFVSVPTHPTITKLRVLSRNQQLIRLDFEEGFEGVDPQPMHERINQALSSIGALVLSDYAKGALASVQQMIQLARKAGVPVLIDPKGTDFERYRGATLLTPNLSEFEAVVGKCKTEEEIVERGMKLIADYELSALLVTRSEQGMSLLQPGKAPLHMPTQAQEVYDVTGAGDTVIGVLAATLAAGNSLEEACFFANAAAGVVVGKLGTSTVSPIELENAVRGRADTGFGVMTEEELKLAVAAARKRGEKVVMTNGVFDILHAGHVFYLANARKLGDRLIVAVNSDASTKRLKGDSRPVNPLEQRMIVLGALEAVDWVVSFEEDTPQRLIAGILPDLLVKGGDYKPEEIAGSKEVWANGGEVLVLNFEDGCSTTNIIKKIQQDKKG</sequence>
<accession>Q7UBI8</accession>
<accession>Q83Q47</accession>
<feature type="chain" id="PRO_0000080127" description="Bifunctional protein HldE">
    <location>
        <begin position="1"/>
        <end position="477"/>
    </location>
</feature>
<feature type="region of interest" description="Ribokinase">
    <location>
        <begin position="1"/>
        <end position="318"/>
    </location>
</feature>
<feature type="region of interest" description="Cytidylyltransferase">
    <location>
        <begin position="344"/>
        <end position="477"/>
    </location>
</feature>
<feature type="active site" evidence="1">
    <location>
        <position position="264"/>
    </location>
</feature>
<feature type="binding site" evidence="1">
    <location>
        <begin position="195"/>
        <end position="198"/>
    </location>
    <ligand>
        <name>ATP</name>
        <dbReference type="ChEBI" id="CHEBI:30616"/>
    </ligand>
</feature>
<feature type="modified residue" description="N6-acetyllysine" evidence="1">
    <location>
        <position position="179"/>
    </location>
</feature>
<feature type="sequence conflict" description="In Ref. 2; AAP18381." evidence="2" ref="2">
    <original>M</original>
    <variation>L</variation>
    <location>
        <position position="133"/>
    </location>
</feature>
<organism>
    <name type="scientific">Shigella flexneri</name>
    <dbReference type="NCBI Taxonomy" id="623"/>
    <lineage>
        <taxon>Bacteria</taxon>
        <taxon>Pseudomonadati</taxon>
        <taxon>Pseudomonadota</taxon>
        <taxon>Gammaproteobacteria</taxon>
        <taxon>Enterobacterales</taxon>
        <taxon>Enterobacteriaceae</taxon>
        <taxon>Shigella</taxon>
    </lineage>
</organism>
<gene>
    <name evidence="1" type="primary">hldE</name>
    <name type="synonym">rfaE</name>
    <name type="ordered locus">SF3093</name>
    <name type="ordered locus">S3298</name>
</gene>